<gene>
    <name evidence="6" type="primary">asL4</name>
</gene>
<protein>
    <recommendedName>
        <fullName evidence="6">FAD-dependent monooxygenase asL4</fullName>
        <ecNumber evidence="4">1.14.13.-</ecNumber>
    </recommendedName>
    <alternativeName>
        <fullName evidence="6">Xenovulene A biosynthesis cluster protein L4</fullName>
    </alternativeName>
</protein>
<keyword id="KW-0274">FAD</keyword>
<keyword id="KW-0285">Flavoprotein</keyword>
<keyword id="KW-0521">NADP</keyword>
<keyword id="KW-0547">Nucleotide-binding</keyword>
<keyword id="KW-0560">Oxidoreductase</keyword>
<evidence type="ECO:0000250" key="1">
    <source>
        <dbReference type="UniProtKB" id="D3HKY4"/>
    </source>
</evidence>
<evidence type="ECO:0000269" key="2">
    <source>
    </source>
</evidence>
<evidence type="ECO:0000269" key="3">
    <source>
    </source>
</evidence>
<evidence type="ECO:0000269" key="4">
    <source>
    </source>
</evidence>
<evidence type="ECO:0000269" key="5">
    <source>
    </source>
</evidence>
<evidence type="ECO:0000303" key="6">
    <source>
    </source>
</evidence>
<evidence type="ECO:0000305" key="7"/>
<reference key="1">
    <citation type="journal article" date="2018" name="Nat. Commun.">
        <title>Three previously unrecognised classes of biosynthetic enzymes revealed during the production of xenovulene A.</title>
        <authorList>
            <person name="Schor R."/>
            <person name="Schotte C."/>
            <person name="Wibberg D."/>
            <person name="Kalinowski J."/>
            <person name="Cox R.J."/>
        </authorList>
    </citation>
    <scope>NUCLEOTIDE SEQUENCE [GENOMIC DNA]</scope>
    <scope>INDUCTION</scope>
    <scope>FUNCTION</scope>
    <scope>DISRUPTION PHENOTYPE</scope>
    <scope>PATHWAY</scope>
</reference>
<reference key="2">
    <citation type="journal article" date="1997" name="J. Pharmacol. Exp. Ther.">
        <title>Regulation of neuronal and recombinant GABA(A) receptor ion channels by xenovulene A, a natural product isolated from Acremonium strictum.</title>
        <authorList>
            <person name="Thomas P."/>
            <person name="Sundaram H."/>
            <person name="Krishek B.J."/>
            <person name="Chazot P."/>
            <person name="Xie X."/>
            <person name="Bevan P."/>
            <person name="Brocchini S.J."/>
            <person name="Latham C.J."/>
            <person name="Charlton P."/>
            <person name="Moore M."/>
            <person name="Lewis S.J."/>
            <person name="Thornton D.M."/>
            <person name="Stephenson F.A."/>
            <person name="Smart T.G."/>
        </authorList>
    </citation>
    <scope>BIOTECHNOLOGY</scope>
</reference>
<reference key="3">
    <citation type="journal article" date="2007" name="Chem. Commun. (Camb.)">
        <title>Characterisation of 3-methylorcinaldehyde synthase (MOS) in Acremonium strictum: first observation of a reductive release mechanism during polyketide biosynthesis.</title>
        <authorList>
            <person name="Bailey A.M."/>
            <person name="Cox R.J."/>
            <person name="Harley K."/>
            <person name="Lazarus C.M."/>
            <person name="Simpson T.J."/>
            <person name="Skellam E."/>
        </authorList>
    </citation>
    <scope>FUNCTION</scope>
</reference>
<reference key="4">
    <citation type="journal article" date="2010" name="Chem. Commun. (Camb.)">
        <title>Catalytic role of the C-terminal domains of a fungal non-reducing polyketide synthase.</title>
        <authorList>
            <person name="Fisch K.M."/>
            <person name="Skellam E."/>
            <person name="Ivison D."/>
            <person name="Cox R.J."/>
            <person name="Bailey A.M."/>
            <person name="Lazarus C.M."/>
            <person name="Simpson T.J."/>
        </authorList>
    </citation>
    <scope>FUNCTION</scope>
</reference>
<organism>
    <name type="scientific">Sarocladium schorii</name>
    <name type="common">Acremonium strictum (strain IMI 501407)</name>
    <dbReference type="NCBI Taxonomy" id="2203296"/>
    <lineage>
        <taxon>Eukaryota</taxon>
        <taxon>Fungi</taxon>
        <taxon>Dikarya</taxon>
        <taxon>Ascomycota</taxon>
        <taxon>Pezizomycotina</taxon>
        <taxon>Sordariomycetes</taxon>
        <taxon>Hypocreomycetidae</taxon>
        <taxon>Hypocreales</taxon>
        <taxon>Sarocladiaceae</taxon>
        <taxon>Sarocladium</taxon>
    </lineage>
</organism>
<feature type="chain" id="PRO_0000449182" description="FAD-dependent monooxygenase asL4">
    <location>
        <begin position="1"/>
        <end position="430"/>
    </location>
</feature>
<feature type="binding site" evidence="1">
    <location>
        <begin position="11"/>
        <end position="14"/>
    </location>
    <ligand>
        <name>FAD</name>
        <dbReference type="ChEBI" id="CHEBI:57692"/>
    </ligand>
</feature>
<feature type="binding site" evidence="1">
    <location>
        <begin position="33"/>
        <end position="34"/>
    </location>
    <ligand>
        <name>FAD</name>
        <dbReference type="ChEBI" id="CHEBI:57692"/>
    </ligand>
</feature>
<feature type="binding site" evidence="1">
    <location>
        <position position="108"/>
    </location>
    <ligand>
        <name>FAD</name>
        <dbReference type="ChEBI" id="CHEBI:57692"/>
    </ligand>
</feature>
<feature type="binding site" evidence="1">
    <location>
        <position position="278"/>
    </location>
    <ligand>
        <name>FAD</name>
        <dbReference type="ChEBI" id="CHEBI:57692"/>
    </ligand>
</feature>
<sequence>MPQLKVLINGGGIAGNAIAFWLTKLGHDVTVLERFPALRTTGLQLDLRGHGIEVLKRMGLDDAMKAKVIKEDGAQFVDTNGKVVAYFPAVDTSKGGVQAFTSEYEIMRGDICRVFYAATKDRATYKFGTSVESFEDLGDSIKVQLTDHTVDHYDLLIGADGVTSSIRKMMLGPGVPDKFIQFQNLYASYFTIPAPIKPDEKYMANIFIAPGSKLLMTRRDNPERLQVYMGGKAPGARLENARRGDTAEEKLGIEEFMQGCGWRTSEMIDELRKADDFYLERLGMVKLDSWHRGRVALVGEAAWCSSVLTGMGTTSCLVGAYCLAGEIAKHCGRGDQGEAKDDPMMVQKNLANALAGYEEKFMPFMHQVQDGLSAKTGTRTYMPSSQWGVTILNWVIKIIALLRLNMAGDWVIREAVRNWKLPDYPELLKE</sequence>
<accession>A0A2U8U2L4</accession>
<name>ASL4_SARSH</name>
<proteinExistence type="evidence at protein level"/>
<comment type="function">
    <text evidence="2 3 4">Flavin-dependent monooxygenase; part of the gene cluster that mediates the biosynthesis of xenovulene A, an unusual meroterpenoid that has potent inhibitory effects on the human gamma-aminobutyrate A (GABAA) benzodiazepine receptor (PubMed:29773797). The first step of xenovulene A biosynthesis is the biosynthesis of 3-methylorcinaldehyde performed by the non-reducing polyketide synthase aspks1 (PubMed:17912413, PubMed:20552126, PubMed:29773797). The salicylate hydroxylase asL1 then catalyzes the oxidative dearomatization of 3-methylorcinaldehyde to yield a dearomatized hydroxycyclohexadione (PubMed:29773797). The 2-oxoglutarate-dependent dioxygenase asL3 further catalyzes the oxidative ring expansion to provide the first tropolone metabolite (PubMed:29773797). The cytochrome P450 monooxygenase asR2 allows the synthesis of tropolone hemiacetal (PubMed:29773797). In parallel, a previously unrecognised class of terpene cyclase, asR6, produces alpha-humulene from farnesylpyrophosphate (FPP) (PubMed:29773797). The putative Diels-Alderase asR5 probably catalyzes the formation of the tropolone-humulene skeleton by linking humulene and the polyketide moiety (PubMed:29773797). Oxidative-ring contractions catalyzed by asL4 and asL6 then processively remove carbon atoms from the polyketide to yield xenovulene A (PubMed:29773797).</text>
</comment>
<comment type="cofactor">
    <cofactor evidence="1">
        <name>FAD</name>
        <dbReference type="ChEBI" id="CHEBI:57692"/>
    </cofactor>
    <text evidence="1">Binds 1 FAD per subunit.</text>
</comment>
<comment type="pathway">
    <text evidence="4">Secondary metabolite biosynthesis; terpenoid biosynthesis.</text>
</comment>
<comment type="induction">
    <text evidence="4">Expression is significantly up-regulated under xenovulene A producing condition.</text>
</comment>
<comment type="disruption phenotype">
    <text evidence="4">Severely reduces, but does not abolish xenovulene A biosynthesis.</text>
</comment>
<comment type="biotechnology">
    <text evidence="5">Xenovulene A is a natural product exhibiting little structural resemblance with classical benzodiazepines yet is able to displace high-affinity ligand binding to the benzodiazepine site of the gamma-aminobutyrate A (GABAA) receptor and could be potentially used as an anti-depressant with reduced addictive properties.</text>
</comment>
<comment type="similarity">
    <text evidence="7">Belongs to the aromatic-ring hydroxylase family.</text>
</comment>
<dbReference type="EC" id="1.14.13.-" evidence="4"/>
<dbReference type="EMBL" id="MG736817">
    <property type="protein sequence ID" value="AWM95786.1"/>
    <property type="molecule type" value="Genomic_DNA"/>
</dbReference>
<dbReference type="SMR" id="A0A2U8U2L4"/>
<dbReference type="UniPathway" id="UPA00213"/>
<dbReference type="GO" id="GO:0071949">
    <property type="term" value="F:FAD binding"/>
    <property type="evidence" value="ECO:0007669"/>
    <property type="project" value="InterPro"/>
</dbReference>
<dbReference type="GO" id="GO:0016491">
    <property type="term" value="F:oxidoreductase activity"/>
    <property type="evidence" value="ECO:0007669"/>
    <property type="project" value="UniProtKB-KW"/>
</dbReference>
<dbReference type="GO" id="GO:0016114">
    <property type="term" value="P:terpenoid biosynthetic process"/>
    <property type="evidence" value="ECO:0007669"/>
    <property type="project" value="UniProtKB-UniPathway"/>
</dbReference>
<dbReference type="Gene3D" id="3.50.50.60">
    <property type="entry name" value="FAD/NAD(P)-binding domain"/>
    <property type="match status" value="1"/>
</dbReference>
<dbReference type="InterPro" id="IPR002938">
    <property type="entry name" value="FAD-bd"/>
</dbReference>
<dbReference type="InterPro" id="IPR036188">
    <property type="entry name" value="FAD/NAD-bd_sf"/>
</dbReference>
<dbReference type="InterPro" id="IPR051704">
    <property type="entry name" value="FAD_aromatic-hydroxylase"/>
</dbReference>
<dbReference type="PANTHER" id="PTHR46865:SF7">
    <property type="entry name" value="MONOOXYGENASE, PUTATIVE (AFU_ORTHOLOGUE AFUA_8G07040)-RELATED"/>
    <property type="match status" value="1"/>
</dbReference>
<dbReference type="PANTHER" id="PTHR46865">
    <property type="entry name" value="OXIDOREDUCTASE-RELATED"/>
    <property type="match status" value="1"/>
</dbReference>
<dbReference type="Pfam" id="PF01494">
    <property type="entry name" value="FAD_binding_3"/>
    <property type="match status" value="1"/>
</dbReference>
<dbReference type="PRINTS" id="PR00420">
    <property type="entry name" value="RNGMNOXGNASE"/>
</dbReference>
<dbReference type="SUPFAM" id="SSF51905">
    <property type="entry name" value="FAD/NAD(P)-binding domain"/>
    <property type="match status" value="1"/>
</dbReference>